<evidence type="ECO:0000250" key="1"/>
<evidence type="ECO:0000255" key="2">
    <source>
        <dbReference type="PROSITE-ProRule" id="PRU01008"/>
    </source>
</evidence>
<evidence type="ECO:0000305" key="3"/>
<feature type="chain" id="PRO_0000234315" description="L-threonine dehydratase biosynthetic IlvA">
    <location>
        <begin position="1"/>
        <end position="422"/>
    </location>
</feature>
<feature type="domain" description="ACT-like" evidence="2">
    <location>
        <begin position="339"/>
        <end position="413"/>
    </location>
</feature>
<feature type="binding site" evidence="1">
    <location>
        <position position="83"/>
    </location>
    <ligand>
        <name>pyridoxal 5'-phosphate</name>
        <dbReference type="ChEBI" id="CHEBI:597326"/>
    </ligand>
</feature>
<feature type="binding site" evidence="1">
    <location>
        <begin position="189"/>
        <end position="193"/>
    </location>
    <ligand>
        <name>pyridoxal 5'-phosphate</name>
        <dbReference type="ChEBI" id="CHEBI:597326"/>
    </ligand>
</feature>
<feature type="binding site" evidence="1">
    <location>
        <position position="315"/>
    </location>
    <ligand>
        <name>pyridoxal 5'-phosphate</name>
        <dbReference type="ChEBI" id="CHEBI:597326"/>
    </ligand>
</feature>
<feature type="modified residue" description="N6-(pyridoxal phosphate)lysine" evidence="1">
    <location>
        <position position="56"/>
    </location>
</feature>
<reference key="1">
    <citation type="journal article" date="2005" name="Proc. Natl. Acad. Sci. U.S.A.">
        <title>Whole genome sequence of Staphylococcus saprophyticus reveals the pathogenesis of uncomplicated urinary tract infection.</title>
        <authorList>
            <person name="Kuroda M."/>
            <person name="Yamashita A."/>
            <person name="Hirakawa H."/>
            <person name="Kumano M."/>
            <person name="Morikawa K."/>
            <person name="Higashide M."/>
            <person name="Maruyama A."/>
            <person name="Inose Y."/>
            <person name="Matoba K."/>
            <person name="Toh H."/>
            <person name="Kuhara S."/>
            <person name="Hattori M."/>
            <person name="Ohta T."/>
        </authorList>
    </citation>
    <scope>NUCLEOTIDE SEQUENCE [LARGE SCALE GENOMIC DNA]</scope>
    <source>
        <strain>ATCC 15305 / DSM 20229 / NCIMB 8711 / NCTC 7292 / S-41</strain>
    </source>
</reference>
<keyword id="KW-0028">Amino-acid biosynthesis</keyword>
<keyword id="KW-0100">Branched-chain amino acid biosynthesis</keyword>
<keyword id="KW-0412">Isoleucine biosynthesis</keyword>
<keyword id="KW-0456">Lyase</keyword>
<keyword id="KW-0663">Pyridoxal phosphate</keyword>
<keyword id="KW-1185">Reference proteome</keyword>
<sequence>MTVKTTVSSKDIDEAYLQLKDIVKETPLQKDHYLSQKYDCKVYLKREDLQWVRSFKLRGAYNAIIALDEADRQNGITCASAGNHAQGVAYTASKLNLNAVIFMPVTTPLQKINQVKFFGGDNTEVVLTGDTFDDCLKEALVYTEENKMNFIDPFNNIYTIAGQGTLAKEILEQSKDNDIQFDYLFAAIGGGGLISGVGTYFKTHSPETSIIGVEPAGAASMYTSVVLENQLVTLPDIDKFVDGASVARVGQITFDISKDIVDDYIQVHEGAVCSTILDMYSKQAIIAEPAGALSIAALDQYQAEIKGKTVVCVVSGGNNDINRMKEIEERSLLFEEMKHYFILNFPQRPGALREFVNEVLGPKDDITKFEYLKKSSQNTGTVIIGIQLNNHKDLGHLKANVDEFDKSNIYINENKMLYSLLI</sequence>
<comment type="function">
    <text evidence="1">Catalyzes the anaerobic formation of alpha-ketobutyrate and ammonia from threonine in a two-step reaction. The first step involved a dehydration of threonine and a production of enamine intermediates (aminocrotonate), which tautomerizes to its imine form (iminobutyrate). Both intermediates are unstable and short-lived. The second step is the nonenzymatic hydrolysis of the enamine/imine intermediates to form 2-ketobutyrate and free ammonia. In the low water environment of the cell, the second step is accelerated by RidA (By similarity).</text>
</comment>
<comment type="catalytic activity">
    <reaction>
        <text>L-threonine = 2-oxobutanoate + NH4(+)</text>
        <dbReference type="Rhea" id="RHEA:22108"/>
        <dbReference type="ChEBI" id="CHEBI:16763"/>
        <dbReference type="ChEBI" id="CHEBI:28938"/>
        <dbReference type="ChEBI" id="CHEBI:57926"/>
        <dbReference type="EC" id="4.3.1.19"/>
    </reaction>
</comment>
<comment type="cofactor">
    <cofactor evidence="1">
        <name>pyridoxal 5'-phosphate</name>
        <dbReference type="ChEBI" id="CHEBI:597326"/>
    </cofactor>
</comment>
<comment type="pathway">
    <text>Amino-acid biosynthesis; L-isoleucine biosynthesis; 2-oxobutanoate from L-threonine: step 1/1.</text>
</comment>
<comment type="subunit">
    <text evidence="1">Homotetramer.</text>
</comment>
<comment type="similarity">
    <text evidence="3">Belongs to the serine/threonine dehydratase family.</text>
</comment>
<accession>Q49Z16</accession>
<organism>
    <name type="scientific">Staphylococcus saprophyticus subsp. saprophyticus (strain ATCC 15305 / DSM 20229 / NCIMB 8711 / NCTC 7292 / S-41)</name>
    <dbReference type="NCBI Taxonomy" id="342451"/>
    <lineage>
        <taxon>Bacteria</taxon>
        <taxon>Bacillati</taxon>
        <taxon>Bacillota</taxon>
        <taxon>Bacilli</taxon>
        <taxon>Bacillales</taxon>
        <taxon>Staphylococcaceae</taxon>
        <taxon>Staphylococcus</taxon>
    </lineage>
</organism>
<protein>
    <recommendedName>
        <fullName>L-threonine dehydratase biosynthetic IlvA</fullName>
        <ecNumber>4.3.1.19</ecNumber>
    </recommendedName>
    <alternativeName>
        <fullName>Threonine deaminase</fullName>
    </alternativeName>
</protein>
<proteinExistence type="inferred from homology"/>
<name>ILVA_STAS1</name>
<dbReference type="EC" id="4.3.1.19"/>
<dbReference type="EMBL" id="AP008934">
    <property type="protein sequence ID" value="BAE17962.1"/>
    <property type="molecule type" value="Genomic_DNA"/>
</dbReference>
<dbReference type="RefSeq" id="WP_011302710.1">
    <property type="nucleotide sequence ID" value="NZ_MTGA01000028.1"/>
</dbReference>
<dbReference type="SMR" id="Q49Z16"/>
<dbReference type="GeneID" id="3617339"/>
<dbReference type="KEGG" id="ssp:SSP0817"/>
<dbReference type="PATRIC" id="fig|342451.11.peg.819"/>
<dbReference type="eggNOG" id="COG1171">
    <property type="taxonomic scope" value="Bacteria"/>
</dbReference>
<dbReference type="HOGENOM" id="CLU_021152_4_2_9"/>
<dbReference type="OrthoDB" id="9811476at2"/>
<dbReference type="UniPathway" id="UPA00047">
    <property type="reaction ID" value="UER00054"/>
</dbReference>
<dbReference type="Proteomes" id="UP000006371">
    <property type="component" value="Chromosome"/>
</dbReference>
<dbReference type="GO" id="GO:0003941">
    <property type="term" value="F:L-serine ammonia-lyase activity"/>
    <property type="evidence" value="ECO:0007669"/>
    <property type="project" value="TreeGrafter"/>
</dbReference>
<dbReference type="GO" id="GO:0030170">
    <property type="term" value="F:pyridoxal phosphate binding"/>
    <property type="evidence" value="ECO:0007669"/>
    <property type="project" value="InterPro"/>
</dbReference>
<dbReference type="GO" id="GO:0004794">
    <property type="term" value="F:threonine deaminase activity"/>
    <property type="evidence" value="ECO:0007669"/>
    <property type="project" value="UniProtKB-EC"/>
</dbReference>
<dbReference type="GO" id="GO:0009097">
    <property type="term" value="P:isoleucine biosynthetic process"/>
    <property type="evidence" value="ECO:0007669"/>
    <property type="project" value="UniProtKB-UniPathway"/>
</dbReference>
<dbReference type="GO" id="GO:0006565">
    <property type="term" value="P:L-serine catabolic process"/>
    <property type="evidence" value="ECO:0007669"/>
    <property type="project" value="TreeGrafter"/>
</dbReference>
<dbReference type="GO" id="GO:0006567">
    <property type="term" value="P:threonine catabolic process"/>
    <property type="evidence" value="ECO:0007669"/>
    <property type="project" value="TreeGrafter"/>
</dbReference>
<dbReference type="GO" id="GO:0006566">
    <property type="term" value="P:threonine metabolic process"/>
    <property type="evidence" value="ECO:0000250"/>
    <property type="project" value="UniProtKB"/>
</dbReference>
<dbReference type="CDD" id="cd04907">
    <property type="entry name" value="ACT_ThrD-I_2"/>
    <property type="match status" value="1"/>
</dbReference>
<dbReference type="CDD" id="cd01562">
    <property type="entry name" value="Thr-dehyd"/>
    <property type="match status" value="1"/>
</dbReference>
<dbReference type="FunFam" id="3.40.50.1100:FF:000005">
    <property type="entry name" value="Threonine dehydratase catabolic"/>
    <property type="match status" value="1"/>
</dbReference>
<dbReference type="Gene3D" id="3.40.50.1100">
    <property type="match status" value="2"/>
</dbReference>
<dbReference type="InterPro" id="IPR045865">
    <property type="entry name" value="ACT-like_dom_sf"/>
</dbReference>
<dbReference type="InterPro" id="IPR011820">
    <property type="entry name" value="IlvA"/>
</dbReference>
<dbReference type="InterPro" id="IPR050147">
    <property type="entry name" value="Ser/Thr_Dehydratase"/>
</dbReference>
<dbReference type="InterPro" id="IPR000634">
    <property type="entry name" value="Ser/Thr_deHydtase_PyrdxlP-BS"/>
</dbReference>
<dbReference type="InterPro" id="IPR001721">
    <property type="entry name" value="TD_ACT-like"/>
</dbReference>
<dbReference type="InterPro" id="IPR001926">
    <property type="entry name" value="TrpB-like_PALP"/>
</dbReference>
<dbReference type="InterPro" id="IPR036052">
    <property type="entry name" value="TrpB-like_PALP_sf"/>
</dbReference>
<dbReference type="NCBIfam" id="NF006390">
    <property type="entry name" value="PRK08639.1"/>
    <property type="match status" value="1"/>
</dbReference>
<dbReference type="NCBIfam" id="TIGR02079">
    <property type="entry name" value="THD1"/>
    <property type="match status" value="1"/>
</dbReference>
<dbReference type="PANTHER" id="PTHR48078:SF11">
    <property type="entry name" value="THREONINE DEHYDRATASE, MITOCHONDRIAL"/>
    <property type="match status" value="1"/>
</dbReference>
<dbReference type="PANTHER" id="PTHR48078">
    <property type="entry name" value="THREONINE DEHYDRATASE, MITOCHONDRIAL-RELATED"/>
    <property type="match status" value="1"/>
</dbReference>
<dbReference type="Pfam" id="PF00291">
    <property type="entry name" value="PALP"/>
    <property type="match status" value="1"/>
</dbReference>
<dbReference type="Pfam" id="PF00585">
    <property type="entry name" value="Thr_dehydrat_C"/>
    <property type="match status" value="1"/>
</dbReference>
<dbReference type="SUPFAM" id="SSF55021">
    <property type="entry name" value="ACT-like"/>
    <property type="match status" value="1"/>
</dbReference>
<dbReference type="SUPFAM" id="SSF53686">
    <property type="entry name" value="Tryptophan synthase beta subunit-like PLP-dependent enzymes"/>
    <property type="match status" value="1"/>
</dbReference>
<dbReference type="PROSITE" id="PS51672">
    <property type="entry name" value="ACT_LIKE"/>
    <property type="match status" value="1"/>
</dbReference>
<dbReference type="PROSITE" id="PS00165">
    <property type="entry name" value="DEHYDRATASE_SER_THR"/>
    <property type="match status" value="1"/>
</dbReference>
<gene>
    <name type="primary">ilvA</name>
    <name type="ordered locus">SSP0817</name>
</gene>